<reference key="1">
    <citation type="journal article" date="2000" name="Nature">
        <title>Sequence and analysis of chromosome 1 of the plant Arabidopsis thaliana.</title>
        <authorList>
            <person name="Theologis A."/>
            <person name="Ecker J.R."/>
            <person name="Palm C.J."/>
            <person name="Federspiel N.A."/>
            <person name="Kaul S."/>
            <person name="White O."/>
            <person name="Alonso J."/>
            <person name="Altafi H."/>
            <person name="Araujo R."/>
            <person name="Bowman C.L."/>
            <person name="Brooks S.Y."/>
            <person name="Buehler E."/>
            <person name="Chan A."/>
            <person name="Chao Q."/>
            <person name="Chen H."/>
            <person name="Cheuk R.F."/>
            <person name="Chin C.W."/>
            <person name="Chung M.K."/>
            <person name="Conn L."/>
            <person name="Conway A.B."/>
            <person name="Conway A.R."/>
            <person name="Creasy T.H."/>
            <person name="Dewar K."/>
            <person name="Dunn P."/>
            <person name="Etgu P."/>
            <person name="Feldblyum T.V."/>
            <person name="Feng J.-D."/>
            <person name="Fong B."/>
            <person name="Fujii C.Y."/>
            <person name="Gill J.E."/>
            <person name="Goldsmith A.D."/>
            <person name="Haas B."/>
            <person name="Hansen N.F."/>
            <person name="Hughes B."/>
            <person name="Huizar L."/>
            <person name="Hunter J.L."/>
            <person name="Jenkins J."/>
            <person name="Johnson-Hopson C."/>
            <person name="Khan S."/>
            <person name="Khaykin E."/>
            <person name="Kim C.J."/>
            <person name="Koo H.L."/>
            <person name="Kremenetskaia I."/>
            <person name="Kurtz D.B."/>
            <person name="Kwan A."/>
            <person name="Lam B."/>
            <person name="Langin-Hooper S."/>
            <person name="Lee A."/>
            <person name="Lee J.M."/>
            <person name="Lenz C.A."/>
            <person name="Li J.H."/>
            <person name="Li Y.-P."/>
            <person name="Lin X."/>
            <person name="Liu S.X."/>
            <person name="Liu Z.A."/>
            <person name="Luros J.S."/>
            <person name="Maiti R."/>
            <person name="Marziali A."/>
            <person name="Militscher J."/>
            <person name="Miranda M."/>
            <person name="Nguyen M."/>
            <person name="Nierman W.C."/>
            <person name="Osborne B.I."/>
            <person name="Pai G."/>
            <person name="Peterson J."/>
            <person name="Pham P.K."/>
            <person name="Rizzo M."/>
            <person name="Rooney T."/>
            <person name="Rowley D."/>
            <person name="Sakano H."/>
            <person name="Salzberg S.L."/>
            <person name="Schwartz J.R."/>
            <person name="Shinn P."/>
            <person name="Southwick A.M."/>
            <person name="Sun H."/>
            <person name="Tallon L.J."/>
            <person name="Tambunga G."/>
            <person name="Toriumi M.J."/>
            <person name="Town C.D."/>
            <person name="Utterback T."/>
            <person name="Van Aken S."/>
            <person name="Vaysberg M."/>
            <person name="Vysotskaia V.S."/>
            <person name="Walker M."/>
            <person name="Wu D."/>
            <person name="Yu G."/>
            <person name="Fraser C.M."/>
            <person name="Venter J.C."/>
            <person name="Davis R.W."/>
        </authorList>
    </citation>
    <scope>NUCLEOTIDE SEQUENCE [LARGE SCALE GENOMIC DNA]</scope>
    <source>
        <strain>cv. Columbia</strain>
    </source>
</reference>
<reference key="2">
    <citation type="journal article" date="2017" name="Plant J.">
        <title>Araport11: a complete reannotation of the Arabidopsis thaliana reference genome.</title>
        <authorList>
            <person name="Cheng C.Y."/>
            <person name="Krishnakumar V."/>
            <person name="Chan A.P."/>
            <person name="Thibaud-Nissen F."/>
            <person name="Schobel S."/>
            <person name="Town C.D."/>
        </authorList>
    </citation>
    <scope>GENOME REANNOTATION</scope>
    <source>
        <strain>cv. Columbia</strain>
    </source>
</reference>
<reference key="3">
    <citation type="journal article" date="2003" name="Science">
        <title>Empirical analysis of transcriptional activity in the Arabidopsis genome.</title>
        <authorList>
            <person name="Yamada K."/>
            <person name="Lim J."/>
            <person name="Dale J.M."/>
            <person name="Chen H."/>
            <person name="Shinn P."/>
            <person name="Palm C.J."/>
            <person name="Southwick A.M."/>
            <person name="Wu H.C."/>
            <person name="Kim C.J."/>
            <person name="Nguyen M."/>
            <person name="Pham P.K."/>
            <person name="Cheuk R.F."/>
            <person name="Karlin-Newmann G."/>
            <person name="Liu S.X."/>
            <person name="Lam B."/>
            <person name="Sakano H."/>
            <person name="Wu T."/>
            <person name="Yu G."/>
            <person name="Miranda M."/>
            <person name="Quach H.L."/>
            <person name="Tripp M."/>
            <person name="Chang C.H."/>
            <person name="Lee J.M."/>
            <person name="Toriumi M.J."/>
            <person name="Chan M.M."/>
            <person name="Tang C.C."/>
            <person name="Onodera C.S."/>
            <person name="Deng J.M."/>
            <person name="Akiyama K."/>
            <person name="Ansari Y."/>
            <person name="Arakawa T."/>
            <person name="Banh J."/>
            <person name="Banno F."/>
            <person name="Bowser L."/>
            <person name="Brooks S.Y."/>
            <person name="Carninci P."/>
            <person name="Chao Q."/>
            <person name="Choy N."/>
            <person name="Enju A."/>
            <person name="Goldsmith A.D."/>
            <person name="Gurjal M."/>
            <person name="Hansen N.F."/>
            <person name="Hayashizaki Y."/>
            <person name="Johnson-Hopson C."/>
            <person name="Hsuan V.W."/>
            <person name="Iida K."/>
            <person name="Karnes M."/>
            <person name="Khan S."/>
            <person name="Koesema E."/>
            <person name="Ishida J."/>
            <person name="Jiang P.X."/>
            <person name="Jones T."/>
            <person name="Kawai J."/>
            <person name="Kamiya A."/>
            <person name="Meyers C."/>
            <person name="Nakajima M."/>
            <person name="Narusaka M."/>
            <person name="Seki M."/>
            <person name="Sakurai T."/>
            <person name="Satou M."/>
            <person name="Tamse R."/>
            <person name="Vaysberg M."/>
            <person name="Wallender E.K."/>
            <person name="Wong C."/>
            <person name="Yamamura Y."/>
            <person name="Yuan S."/>
            <person name="Shinozaki K."/>
            <person name="Davis R.W."/>
            <person name="Theologis A."/>
            <person name="Ecker J.R."/>
        </authorList>
    </citation>
    <scope>NUCLEOTIDE SEQUENCE [LARGE SCALE MRNA]</scope>
    <source>
        <strain>cv. Columbia</strain>
    </source>
</reference>
<reference key="4">
    <citation type="journal article" date="2003" name="Mol. Cell. Proteomics">
        <title>Large-scale analysis of in vivo phosphorylated membrane proteins by immobilized metal ion affinity chromatography and mass spectrometry.</title>
        <authorList>
            <person name="Nuehse T.S."/>
            <person name="Stensballe A."/>
            <person name="Jensen O.N."/>
            <person name="Peck S.C."/>
        </authorList>
    </citation>
    <scope>PHOSPHORYLATION [LARGE SCALE ANALYSIS] AT SER-315</scope>
    <scope>IDENTIFICATION BY MASS SPECTROMETRY [LARGE SCALE ANALYSIS]</scope>
    <source>
        <strain>cv. La-0</strain>
    </source>
</reference>
<reference key="5">
    <citation type="journal article" date="2004" name="Plant Cell">
        <title>Phosphoproteomics of the Arabidopsis plasma membrane and a new phosphorylation site database.</title>
        <authorList>
            <person name="Nuehse T.S."/>
            <person name="Stensballe A."/>
            <person name="Jensen O.N."/>
            <person name="Peck S.C."/>
        </authorList>
    </citation>
    <scope>PHOSPHORYLATION [LARGE SCALE ANALYSIS] AT SER-315</scope>
    <scope>IDENTIFICATION BY MASS SPECTROMETRY [LARGE SCALE ANALYSIS]</scope>
</reference>
<reference key="6">
    <citation type="journal article" date="2009" name="BMC Genomics">
        <title>Genome wide expression analysis of CBS domain containing proteins in Arabidopsis thaliana (L.) Heynh and Oryza sativa L. reveals their developmental and stress regulation.</title>
        <authorList>
            <person name="Kushwaha H.R."/>
            <person name="Singh A.K."/>
            <person name="Sopory S.K."/>
            <person name="Singla-Pareek S.L."/>
            <person name="Pareek A."/>
        </authorList>
    </citation>
    <scope>GENE FAMILY</scope>
    <scope>NOMENCLATURE</scope>
</reference>
<reference key="7">
    <citation type="journal article" date="2009" name="J. Proteomics">
        <title>Phosphoproteomic analysis of nuclei-enriched fractions from Arabidopsis thaliana.</title>
        <authorList>
            <person name="Jones A.M.E."/>
            <person name="MacLean D."/>
            <person name="Studholme D.J."/>
            <person name="Serna-Sanz A."/>
            <person name="Andreasson E."/>
            <person name="Rathjen J.P."/>
            <person name="Peck S.C."/>
        </authorList>
    </citation>
    <scope>PHOSPHORYLATION [LARGE SCALE ANALYSIS] AT SER-315</scope>
    <scope>IDENTIFICATION BY MASS SPECTROMETRY [LARGE SCALE ANALYSIS]</scope>
    <source>
        <strain>cv. Columbia</strain>
    </source>
</reference>
<proteinExistence type="evidence at protein level"/>
<accession>Q8RY60</accession>
<accession>Q9FX04</accession>
<organism>
    <name type="scientific">Arabidopsis thaliana</name>
    <name type="common">Mouse-ear cress</name>
    <dbReference type="NCBI Taxonomy" id="3702"/>
    <lineage>
        <taxon>Eukaryota</taxon>
        <taxon>Viridiplantae</taxon>
        <taxon>Streptophyta</taxon>
        <taxon>Embryophyta</taxon>
        <taxon>Tracheophyta</taxon>
        <taxon>Spermatophyta</taxon>
        <taxon>Magnoliopsida</taxon>
        <taxon>eudicotyledons</taxon>
        <taxon>Gunneridae</taxon>
        <taxon>Pentapetalae</taxon>
        <taxon>rosids</taxon>
        <taxon>malvids</taxon>
        <taxon>Brassicales</taxon>
        <taxon>Brassicaceae</taxon>
        <taxon>Camelineae</taxon>
        <taxon>Arabidopsis</taxon>
    </lineage>
</organism>
<comment type="subcellular location">
    <subcellularLocation>
        <location evidence="5">Membrane</location>
        <topology evidence="5">Multi-pass membrane protein</topology>
    </subcellularLocation>
</comment>
<comment type="sequence caution" evidence="5">
    <conflict type="erroneous gene model prediction">
        <sequence resource="EMBL-CDS" id="AAG11421"/>
    </conflict>
</comment>
<name>Y1733_ARATH</name>
<protein>
    <recommendedName>
        <fullName>DUF21 domain-containing protein At1g47330</fullName>
    </recommendedName>
    <alternativeName>
        <fullName>CBS domain-containing protein CBSDUF7</fullName>
    </alternativeName>
</protein>
<dbReference type="EMBL" id="AC015449">
    <property type="protein sequence ID" value="AAG11421.1"/>
    <property type="status" value="ALT_SEQ"/>
    <property type="molecule type" value="Genomic_DNA"/>
</dbReference>
<dbReference type="EMBL" id="CP002684">
    <property type="protein sequence ID" value="AEE32157.1"/>
    <property type="molecule type" value="Genomic_DNA"/>
</dbReference>
<dbReference type="EMBL" id="AY075631">
    <property type="protein sequence ID" value="AAL91640.1"/>
    <property type="molecule type" value="mRNA"/>
</dbReference>
<dbReference type="EMBL" id="AY133580">
    <property type="protein sequence ID" value="AAM91410.1"/>
    <property type="molecule type" value="mRNA"/>
</dbReference>
<dbReference type="PIR" id="A96514">
    <property type="entry name" value="A96514"/>
</dbReference>
<dbReference type="RefSeq" id="NP_175166.2">
    <property type="nucleotide sequence ID" value="NM_103627.5"/>
</dbReference>
<dbReference type="SMR" id="Q8RY60"/>
<dbReference type="BioGRID" id="26361">
    <property type="interactions" value="3"/>
</dbReference>
<dbReference type="FunCoup" id="Q8RY60">
    <property type="interactions" value="2150"/>
</dbReference>
<dbReference type="IntAct" id="Q8RY60">
    <property type="interactions" value="3"/>
</dbReference>
<dbReference type="STRING" id="3702.Q8RY60"/>
<dbReference type="TCDB" id="1.A.112.1.9">
    <property type="family name" value="the cyclin m mg2+ exporter (cnnm) family"/>
</dbReference>
<dbReference type="GlyCosmos" id="Q8RY60">
    <property type="glycosylation" value="1 site, No reported glycans"/>
</dbReference>
<dbReference type="GlyGen" id="Q8RY60">
    <property type="glycosylation" value="1 site"/>
</dbReference>
<dbReference type="iPTMnet" id="Q8RY60"/>
<dbReference type="PaxDb" id="3702-AT1G47330.1"/>
<dbReference type="ProteomicsDB" id="243091"/>
<dbReference type="EnsemblPlants" id="AT1G47330.1">
    <property type="protein sequence ID" value="AT1G47330.1"/>
    <property type="gene ID" value="AT1G47330"/>
</dbReference>
<dbReference type="GeneID" id="841136"/>
<dbReference type="Gramene" id="AT1G47330.1">
    <property type="protein sequence ID" value="AT1G47330.1"/>
    <property type="gene ID" value="AT1G47330"/>
</dbReference>
<dbReference type="KEGG" id="ath:AT1G47330"/>
<dbReference type="Araport" id="AT1G47330"/>
<dbReference type="TAIR" id="AT1G47330"/>
<dbReference type="eggNOG" id="KOG2118">
    <property type="taxonomic scope" value="Eukaryota"/>
</dbReference>
<dbReference type="HOGENOM" id="CLU_011310_0_0_1"/>
<dbReference type="InParanoid" id="Q8RY60"/>
<dbReference type="OMA" id="MVIRKIP"/>
<dbReference type="OrthoDB" id="5353557at2759"/>
<dbReference type="PhylomeDB" id="Q8RY60"/>
<dbReference type="PRO" id="PR:Q8RY60"/>
<dbReference type="Proteomes" id="UP000006548">
    <property type="component" value="Chromosome 1"/>
</dbReference>
<dbReference type="ExpressionAtlas" id="Q8RY60">
    <property type="expression patterns" value="baseline and differential"/>
</dbReference>
<dbReference type="GO" id="GO:0005886">
    <property type="term" value="C:plasma membrane"/>
    <property type="evidence" value="ECO:0007005"/>
    <property type="project" value="TAIR"/>
</dbReference>
<dbReference type="GO" id="GO:0010960">
    <property type="term" value="P:magnesium ion homeostasis"/>
    <property type="evidence" value="ECO:0007669"/>
    <property type="project" value="InterPro"/>
</dbReference>
<dbReference type="CDD" id="cd04590">
    <property type="entry name" value="CBS_pair_CorC_HlyC_assoc"/>
    <property type="match status" value="1"/>
</dbReference>
<dbReference type="FunFam" id="3.10.580.10:FF:000079">
    <property type="entry name" value="DUF21 domain-containing protein At1g47330"/>
    <property type="match status" value="1"/>
</dbReference>
<dbReference type="FunFam" id="3.10.580.10:FF:000063">
    <property type="entry name" value="DUF21 domain-containing protein At5g52790"/>
    <property type="match status" value="1"/>
</dbReference>
<dbReference type="Gene3D" id="3.10.580.10">
    <property type="entry name" value="CBS-domain"/>
    <property type="match status" value="2"/>
</dbReference>
<dbReference type="InterPro" id="IPR045095">
    <property type="entry name" value="ACDP"/>
</dbReference>
<dbReference type="InterPro" id="IPR046342">
    <property type="entry name" value="CBS_dom_sf"/>
</dbReference>
<dbReference type="InterPro" id="IPR002550">
    <property type="entry name" value="CNNM"/>
</dbReference>
<dbReference type="InterPro" id="IPR044751">
    <property type="entry name" value="Ion_transp-like_CBS"/>
</dbReference>
<dbReference type="PANTHER" id="PTHR12064:SF76">
    <property type="entry name" value="CNNM TRANSMEMBRANE DOMAIN-CONTAINING PROTEIN"/>
    <property type="match status" value="1"/>
</dbReference>
<dbReference type="PANTHER" id="PTHR12064">
    <property type="entry name" value="METAL TRANSPORTER CNNM"/>
    <property type="match status" value="1"/>
</dbReference>
<dbReference type="Pfam" id="PF01595">
    <property type="entry name" value="CNNM"/>
    <property type="match status" value="1"/>
</dbReference>
<dbReference type="SUPFAM" id="SSF54631">
    <property type="entry name" value="CBS-domain pair"/>
    <property type="match status" value="1"/>
</dbReference>
<dbReference type="PROSITE" id="PS51371">
    <property type="entry name" value="CBS"/>
    <property type="match status" value="2"/>
</dbReference>
<dbReference type="PROSITE" id="PS51846">
    <property type="entry name" value="CNNM"/>
    <property type="match status" value="1"/>
</dbReference>
<sequence length="527" mass="57930">MSSDIPCCGTTFSLYVVIIIALVAFAGLMAGLTLGLMSLGLVDLEVLIKSGRPQDRINAGKIFPVVKNQHLLLCTLLIGNSMAMEALPIFLDKIVPPWLAILLSVTLILVFGEIMPQAVCTRYGLKVGAIMAPFVRVLLVLFFPISYPISKVLDWMLGKGHGVLLRRAELKTFVNFHGNEAGKGGDLTTDETSIITGALELTEKTAKDAMTPISNAFSLELDTPLNLETLNTIMSVGHSRVPVYFRNPTHIIGLILVKNLLAVDARKEVPLRKMSMRKIPRVSETMPLYDILNEFQKGHSHIAVVYKDLDEQEQSPETSENGIERRKNKKTKDELFKDSCRKPKAQFEVSEKEVFKIETGDAKSGKSENGEEQQGSGKTSLLAAPAKKRHRGCSFCILDIENTPIPDFPTNEEVVGVITMEDVIEELLQEEILDETDEYVNIHNRIRVNMHASPENLPSVITSITQSSSGSTSPNQTSHMATPDSSPTTKPSNSSPTRKPSVSSPTREPSDSSHSMAPKHEESTQTL</sequence>
<gene>
    <name type="primary">CBSDUF7</name>
    <name type="ordered locus">At1g47330</name>
    <name type="ORF">T3F24.6</name>
</gene>
<keyword id="KW-0129">CBS domain</keyword>
<keyword id="KW-0325">Glycoprotein</keyword>
<keyword id="KW-0472">Membrane</keyword>
<keyword id="KW-0597">Phosphoprotein</keyword>
<keyword id="KW-1185">Reference proteome</keyword>
<keyword id="KW-0677">Repeat</keyword>
<keyword id="KW-0812">Transmembrane</keyword>
<keyword id="KW-1133">Transmembrane helix</keyword>
<evidence type="ECO:0000255" key="1"/>
<evidence type="ECO:0000255" key="2">
    <source>
        <dbReference type="PROSITE-ProRule" id="PRU00703"/>
    </source>
</evidence>
<evidence type="ECO:0000255" key="3">
    <source>
        <dbReference type="PROSITE-ProRule" id="PRU01193"/>
    </source>
</evidence>
<evidence type="ECO:0000256" key="4">
    <source>
        <dbReference type="SAM" id="MobiDB-lite"/>
    </source>
</evidence>
<evidence type="ECO:0000305" key="5"/>
<evidence type="ECO:0007744" key="6">
    <source>
    </source>
</evidence>
<evidence type="ECO:0007744" key="7">
    <source>
    </source>
</evidence>
<evidence type="ECO:0007744" key="8">
    <source>
    </source>
</evidence>
<feature type="chain" id="PRO_0000411684" description="DUF21 domain-containing protein At1g47330">
    <location>
        <begin position="1"/>
        <end position="527"/>
    </location>
</feature>
<feature type="topological domain" description="Extracellular" evidence="1">
    <location>
        <begin position="1"/>
        <end position="15"/>
    </location>
</feature>
<feature type="transmembrane region" description="Helical" evidence="1">
    <location>
        <begin position="16"/>
        <end position="36"/>
    </location>
</feature>
<feature type="topological domain" description="Cytoplasmic" evidence="1">
    <location>
        <begin position="37"/>
        <end position="70"/>
    </location>
</feature>
<feature type="transmembrane region" description="Helical" evidence="1">
    <location>
        <begin position="71"/>
        <end position="91"/>
    </location>
</feature>
<feature type="topological domain" description="Extracellular" evidence="1">
    <location>
        <begin position="92"/>
        <end position="93"/>
    </location>
</feature>
<feature type="transmembrane region" description="Helical" evidence="1">
    <location>
        <begin position="94"/>
        <end position="114"/>
    </location>
</feature>
<feature type="topological domain" description="Cytoplasmic" evidence="1">
    <location>
        <begin position="115"/>
        <end position="126"/>
    </location>
</feature>
<feature type="transmembrane region" description="Helical" evidence="1">
    <location>
        <begin position="127"/>
        <end position="147"/>
    </location>
</feature>
<feature type="topological domain" description="Extracellular" evidence="1">
    <location>
        <begin position="148"/>
        <end position="527"/>
    </location>
</feature>
<feature type="domain" description="CNNM transmembrane" evidence="3">
    <location>
        <begin position="8"/>
        <end position="191"/>
    </location>
</feature>
<feature type="domain" description="CBS 1" evidence="2">
    <location>
        <begin position="210"/>
        <end position="271"/>
    </location>
</feature>
<feature type="domain" description="CBS 2" evidence="2">
    <location>
        <begin position="274"/>
        <end position="334"/>
    </location>
</feature>
<feature type="domain" description="CBS 3" evidence="2">
    <location>
        <begin position="366"/>
        <end position="435"/>
    </location>
</feature>
<feature type="region of interest" description="Disordered" evidence="4">
    <location>
        <begin position="307"/>
        <end position="335"/>
    </location>
</feature>
<feature type="region of interest" description="Disordered" evidence="4">
    <location>
        <begin position="358"/>
        <end position="384"/>
    </location>
</feature>
<feature type="region of interest" description="Disordered" evidence="4">
    <location>
        <begin position="464"/>
        <end position="527"/>
    </location>
</feature>
<feature type="compositionally biased region" description="Basic and acidic residues" evidence="4">
    <location>
        <begin position="358"/>
        <end position="369"/>
    </location>
</feature>
<feature type="compositionally biased region" description="Low complexity" evidence="4">
    <location>
        <begin position="464"/>
        <end position="501"/>
    </location>
</feature>
<feature type="compositionally biased region" description="Polar residues" evidence="4">
    <location>
        <begin position="502"/>
        <end position="515"/>
    </location>
</feature>
<feature type="compositionally biased region" description="Basic and acidic residues" evidence="4">
    <location>
        <begin position="518"/>
        <end position="527"/>
    </location>
</feature>
<feature type="modified residue" description="Phosphoserine" evidence="6 7 8">
    <location>
        <position position="315"/>
    </location>
</feature>
<feature type="glycosylation site" description="N-linked (GlcNAc...) asparagine" evidence="1">
    <location>
        <position position="475"/>
    </location>
</feature>